<comment type="similarity">
    <text evidence="1">Belongs to the bacterial ribosomal protein bS21 family.</text>
</comment>
<sequence>MAEVKLQEGESLENALRRFKRKVQQEDIIKEVKRHSFYLKPGEKKRVKEALARKRSRKKARKEQD</sequence>
<evidence type="ECO:0000255" key="1">
    <source>
        <dbReference type="HAMAP-Rule" id="MF_00358"/>
    </source>
</evidence>
<evidence type="ECO:0000256" key="2">
    <source>
        <dbReference type="SAM" id="MobiDB-lite"/>
    </source>
</evidence>
<evidence type="ECO:0000305" key="3"/>
<organism>
    <name type="scientific">Koribacter versatilis (strain Ellin345)</name>
    <dbReference type="NCBI Taxonomy" id="204669"/>
    <lineage>
        <taxon>Bacteria</taxon>
        <taxon>Pseudomonadati</taxon>
        <taxon>Acidobacteriota</taxon>
        <taxon>Terriglobia</taxon>
        <taxon>Terriglobales</taxon>
        <taxon>Candidatus Korobacteraceae</taxon>
        <taxon>Candidatus Korobacter</taxon>
    </lineage>
</organism>
<dbReference type="EMBL" id="CP000360">
    <property type="protein sequence ID" value="ABF40210.1"/>
    <property type="molecule type" value="Genomic_DNA"/>
</dbReference>
<dbReference type="RefSeq" id="WP_011522012.1">
    <property type="nucleotide sequence ID" value="NC_008009.1"/>
</dbReference>
<dbReference type="SMR" id="Q1ISE0"/>
<dbReference type="STRING" id="204669.Acid345_1208"/>
<dbReference type="EnsemblBacteria" id="ABF40210">
    <property type="protein sequence ID" value="ABF40210"/>
    <property type="gene ID" value="Acid345_1208"/>
</dbReference>
<dbReference type="KEGG" id="aba:Acid345_1208"/>
<dbReference type="eggNOG" id="COG0828">
    <property type="taxonomic scope" value="Bacteria"/>
</dbReference>
<dbReference type="HOGENOM" id="CLU_159258_1_2_0"/>
<dbReference type="OrthoDB" id="9799244at2"/>
<dbReference type="Proteomes" id="UP000002432">
    <property type="component" value="Chromosome"/>
</dbReference>
<dbReference type="GO" id="GO:1990904">
    <property type="term" value="C:ribonucleoprotein complex"/>
    <property type="evidence" value="ECO:0007669"/>
    <property type="project" value="UniProtKB-KW"/>
</dbReference>
<dbReference type="GO" id="GO:0005840">
    <property type="term" value="C:ribosome"/>
    <property type="evidence" value="ECO:0007669"/>
    <property type="project" value="UniProtKB-KW"/>
</dbReference>
<dbReference type="GO" id="GO:0003735">
    <property type="term" value="F:structural constituent of ribosome"/>
    <property type="evidence" value="ECO:0007669"/>
    <property type="project" value="InterPro"/>
</dbReference>
<dbReference type="GO" id="GO:0006412">
    <property type="term" value="P:translation"/>
    <property type="evidence" value="ECO:0007669"/>
    <property type="project" value="UniProtKB-UniRule"/>
</dbReference>
<dbReference type="Gene3D" id="1.20.5.1150">
    <property type="entry name" value="Ribosomal protein S8"/>
    <property type="match status" value="1"/>
</dbReference>
<dbReference type="HAMAP" id="MF_00358">
    <property type="entry name" value="Ribosomal_bS21"/>
    <property type="match status" value="1"/>
</dbReference>
<dbReference type="InterPro" id="IPR001911">
    <property type="entry name" value="Ribosomal_bS21"/>
</dbReference>
<dbReference type="InterPro" id="IPR038380">
    <property type="entry name" value="Ribosomal_bS21_sf"/>
</dbReference>
<dbReference type="NCBIfam" id="TIGR00030">
    <property type="entry name" value="S21p"/>
    <property type="match status" value="1"/>
</dbReference>
<dbReference type="Pfam" id="PF01165">
    <property type="entry name" value="Ribosomal_S21"/>
    <property type="match status" value="1"/>
</dbReference>
<dbReference type="PRINTS" id="PR00976">
    <property type="entry name" value="RIBOSOMALS21"/>
</dbReference>
<proteinExistence type="inferred from homology"/>
<name>RS21_KORVE</name>
<accession>Q1ISE0</accession>
<gene>
    <name evidence="1" type="primary">rpsU</name>
    <name type="ordered locus">Acid345_1208</name>
</gene>
<keyword id="KW-1185">Reference proteome</keyword>
<keyword id="KW-0687">Ribonucleoprotein</keyword>
<keyword id="KW-0689">Ribosomal protein</keyword>
<protein>
    <recommendedName>
        <fullName evidence="1">Small ribosomal subunit protein bS21</fullName>
    </recommendedName>
    <alternativeName>
        <fullName evidence="3">30S ribosomal protein S21</fullName>
    </alternativeName>
</protein>
<reference key="1">
    <citation type="journal article" date="2009" name="Appl. Environ. Microbiol.">
        <title>Three genomes from the phylum Acidobacteria provide insight into the lifestyles of these microorganisms in soils.</title>
        <authorList>
            <person name="Ward N.L."/>
            <person name="Challacombe J.F."/>
            <person name="Janssen P.H."/>
            <person name="Henrissat B."/>
            <person name="Coutinho P.M."/>
            <person name="Wu M."/>
            <person name="Xie G."/>
            <person name="Haft D.H."/>
            <person name="Sait M."/>
            <person name="Badger J."/>
            <person name="Barabote R.D."/>
            <person name="Bradley B."/>
            <person name="Brettin T.S."/>
            <person name="Brinkac L.M."/>
            <person name="Bruce D."/>
            <person name="Creasy T."/>
            <person name="Daugherty S.C."/>
            <person name="Davidsen T.M."/>
            <person name="DeBoy R.T."/>
            <person name="Detter J.C."/>
            <person name="Dodson R.J."/>
            <person name="Durkin A.S."/>
            <person name="Ganapathy A."/>
            <person name="Gwinn-Giglio M."/>
            <person name="Han C.S."/>
            <person name="Khouri H."/>
            <person name="Kiss H."/>
            <person name="Kothari S.P."/>
            <person name="Madupu R."/>
            <person name="Nelson K.E."/>
            <person name="Nelson W.C."/>
            <person name="Paulsen I."/>
            <person name="Penn K."/>
            <person name="Ren Q."/>
            <person name="Rosovitz M.J."/>
            <person name="Selengut J.D."/>
            <person name="Shrivastava S."/>
            <person name="Sullivan S.A."/>
            <person name="Tapia R."/>
            <person name="Thompson L.S."/>
            <person name="Watkins K.L."/>
            <person name="Yang Q."/>
            <person name="Yu C."/>
            <person name="Zafar N."/>
            <person name="Zhou L."/>
            <person name="Kuske C.R."/>
        </authorList>
    </citation>
    <scope>NUCLEOTIDE SEQUENCE [LARGE SCALE GENOMIC DNA]</scope>
    <source>
        <strain>Ellin345</strain>
    </source>
</reference>
<feature type="chain" id="PRO_0000266618" description="Small ribosomal subunit protein bS21">
    <location>
        <begin position="1"/>
        <end position="65"/>
    </location>
</feature>
<feature type="region of interest" description="Disordered" evidence="2">
    <location>
        <begin position="43"/>
        <end position="65"/>
    </location>
</feature>
<feature type="compositionally biased region" description="Basic and acidic residues" evidence="2">
    <location>
        <begin position="43"/>
        <end position="52"/>
    </location>
</feature>
<feature type="compositionally biased region" description="Basic residues" evidence="2">
    <location>
        <begin position="53"/>
        <end position="65"/>
    </location>
</feature>